<proteinExistence type="inferred from homology"/>
<gene>
    <name evidence="1" type="primary">hslU</name>
    <name type="ordered locus">Rpal_0308</name>
</gene>
<comment type="function">
    <text evidence="1">ATPase subunit of a proteasome-like degradation complex; this subunit has chaperone activity. The binding of ATP and its subsequent hydrolysis by HslU are essential for unfolding of protein substrates subsequently hydrolyzed by HslV. HslU recognizes the N-terminal part of its protein substrates and unfolds these before they are guided to HslV for hydrolysis.</text>
</comment>
<comment type="subunit">
    <text evidence="1">A double ring-shaped homohexamer of HslV is capped on each side by a ring-shaped HslU homohexamer. The assembly of the HslU/HslV complex is dependent on binding of ATP.</text>
</comment>
<comment type="subcellular location">
    <subcellularLocation>
        <location evidence="1">Cytoplasm</location>
    </subcellularLocation>
</comment>
<comment type="similarity">
    <text evidence="1">Belongs to the ClpX chaperone family. HslU subfamily.</text>
</comment>
<accession>B3Q8B9</accession>
<keyword id="KW-0067">ATP-binding</keyword>
<keyword id="KW-0143">Chaperone</keyword>
<keyword id="KW-0963">Cytoplasm</keyword>
<keyword id="KW-0547">Nucleotide-binding</keyword>
<keyword id="KW-0346">Stress response</keyword>
<reference key="1">
    <citation type="submission" date="2008-05" db="EMBL/GenBank/DDBJ databases">
        <title>Complete sequence of Rhodopseudomonas palustris TIE-1.</title>
        <authorList>
            <consortium name="US DOE Joint Genome Institute"/>
            <person name="Lucas S."/>
            <person name="Copeland A."/>
            <person name="Lapidus A."/>
            <person name="Glavina del Rio T."/>
            <person name="Dalin E."/>
            <person name="Tice H."/>
            <person name="Pitluck S."/>
            <person name="Chain P."/>
            <person name="Malfatti S."/>
            <person name="Shin M."/>
            <person name="Vergez L."/>
            <person name="Lang D."/>
            <person name="Schmutz J."/>
            <person name="Larimer F."/>
            <person name="Land M."/>
            <person name="Hauser L."/>
            <person name="Kyrpides N."/>
            <person name="Mikhailova N."/>
            <person name="Emerson D."/>
            <person name="Newman D.K."/>
            <person name="Roden E."/>
            <person name="Richardson P."/>
        </authorList>
    </citation>
    <scope>NUCLEOTIDE SEQUENCE [LARGE SCALE GENOMIC DNA]</scope>
    <source>
        <strain>TIE-1</strain>
    </source>
</reference>
<organism>
    <name type="scientific">Rhodopseudomonas palustris (strain TIE-1)</name>
    <dbReference type="NCBI Taxonomy" id="395960"/>
    <lineage>
        <taxon>Bacteria</taxon>
        <taxon>Pseudomonadati</taxon>
        <taxon>Pseudomonadota</taxon>
        <taxon>Alphaproteobacteria</taxon>
        <taxon>Hyphomicrobiales</taxon>
        <taxon>Nitrobacteraceae</taxon>
        <taxon>Rhodopseudomonas</taxon>
    </lineage>
</organism>
<feature type="chain" id="PRO_1000100967" description="ATP-dependent protease ATPase subunit HslU">
    <location>
        <begin position="1"/>
        <end position="433"/>
    </location>
</feature>
<feature type="binding site" evidence="1">
    <location>
        <position position="18"/>
    </location>
    <ligand>
        <name>ATP</name>
        <dbReference type="ChEBI" id="CHEBI:30616"/>
    </ligand>
</feature>
<feature type="binding site" evidence="1">
    <location>
        <begin position="60"/>
        <end position="65"/>
    </location>
    <ligand>
        <name>ATP</name>
        <dbReference type="ChEBI" id="CHEBI:30616"/>
    </ligand>
</feature>
<feature type="binding site" evidence="1">
    <location>
        <position position="246"/>
    </location>
    <ligand>
        <name>ATP</name>
        <dbReference type="ChEBI" id="CHEBI:30616"/>
    </ligand>
</feature>
<feature type="binding site" evidence="1">
    <location>
        <position position="311"/>
    </location>
    <ligand>
        <name>ATP</name>
        <dbReference type="ChEBI" id="CHEBI:30616"/>
    </ligand>
</feature>
<feature type="binding site" evidence="1">
    <location>
        <position position="383"/>
    </location>
    <ligand>
        <name>ATP</name>
        <dbReference type="ChEBI" id="CHEBI:30616"/>
    </ligand>
</feature>
<protein>
    <recommendedName>
        <fullName evidence="1">ATP-dependent protease ATPase subunit HslU</fullName>
    </recommendedName>
    <alternativeName>
        <fullName evidence="1">Unfoldase HslU</fullName>
    </alternativeName>
</protein>
<dbReference type="EMBL" id="CP001096">
    <property type="protein sequence ID" value="ACE98868.1"/>
    <property type="molecule type" value="Genomic_DNA"/>
</dbReference>
<dbReference type="RefSeq" id="WP_012494055.1">
    <property type="nucleotide sequence ID" value="NC_011004.1"/>
</dbReference>
<dbReference type="SMR" id="B3Q8B9"/>
<dbReference type="KEGG" id="rpt:Rpal_0308"/>
<dbReference type="HOGENOM" id="CLU_033123_0_0_5"/>
<dbReference type="OrthoDB" id="9804062at2"/>
<dbReference type="Proteomes" id="UP000001725">
    <property type="component" value="Chromosome"/>
</dbReference>
<dbReference type="GO" id="GO:0009376">
    <property type="term" value="C:HslUV protease complex"/>
    <property type="evidence" value="ECO:0007669"/>
    <property type="project" value="UniProtKB-UniRule"/>
</dbReference>
<dbReference type="GO" id="GO:0005524">
    <property type="term" value="F:ATP binding"/>
    <property type="evidence" value="ECO:0007669"/>
    <property type="project" value="UniProtKB-UniRule"/>
</dbReference>
<dbReference type="GO" id="GO:0016887">
    <property type="term" value="F:ATP hydrolysis activity"/>
    <property type="evidence" value="ECO:0007669"/>
    <property type="project" value="InterPro"/>
</dbReference>
<dbReference type="GO" id="GO:0008233">
    <property type="term" value="F:peptidase activity"/>
    <property type="evidence" value="ECO:0007669"/>
    <property type="project" value="InterPro"/>
</dbReference>
<dbReference type="GO" id="GO:0036402">
    <property type="term" value="F:proteasome-activating activity"/>
    <property type="evidence" value="ECO:0007669"/>
    <property type="project" value="UniProtKB-UniRule"/>
</dbReference>
<dbReference type="GO" id="GO:0043335">
    <property type="term" value="P:protein unfolding"/>
    <property type="evidence" value="ECO:0007669"/>
    <property type="project" value="UniProtKB-UniRule"/>
</dbReference>
<dbReference type="GO" id="GO:0051603">
    <property type="term" value="P:proteolysis involved in protein catabolic process"/>
    <property type="evidence" value="ECO:0007669"/>
    <property type="project" value="TreeGrafter"/>
</dbReference>
<dbReference type="CDD" id="cd19498">
    <property type="entry name" value="RecA-like_HslU"/>
    <property type="match status" value="1"/>
</dbReference>
<dbReference type="FunFam" id="3.40.50.300:FF:000213">
    <property type="entry name" value="ATP-dependent protease ATPase subunit HslU"/>
    <property type="match status" value="1"/>
</dbReference>
<dbReference type="FunFam" id="3.40.50.300:FF:000220">
    <property type="entry name" value="ATP-dependent protease ATPase subunit HslU"/>
    <property type="match status" value="1"/>
</dbReference>
<dbReference type="Gene3D" id="1.10.8.60">
    <property type="match status" value="1"/>
</dbReference>
<dbReference type="Gene3D" id="3.40.50.300">
    <property type="entry name" value="P-loop containing nucleotide triphosphate hydrolases"/>
    <property type="match status" value="2"/>
</dbReference>
<dbReference type="HAMAP" id="MF_00249">
    <property type="entry name" value="HslU"/>
    <property type="match status" value="1"/>
</dbReference>
<dbReference type="InterPro" id="IPR003593">
    <property type="entry name" value="AAA+_ATPase"/>
</dbReference>
<dbReference type="InterPro" id="IPR050052">
    <property type="entry name" value="ATP-dep_Clp_protease_ClpX"/>
</dbReference>
<dbReference type="InterPro" id="IPR003959">
    <property type="entry name" value="ATPase_AAA_core"/>
</dbReference>
<dbReference type="InterPro" id="IPR019489">
    <property type="entry name" value="Clp_ATPase_C"/>
</dbReference>
<dbReference type="InterPro" id="IPR004491">
    <property type="entry name" value="HslU"/>
</dbReference>
<dbReference type="InterPro" id="IPR027417">
    <property type="entry name" value="P-loop_NTPase"/>
</dbReference>
<dbReference type="NCBIfam" id="TIGR00390">
    <property type="entry name" value="hslU"/>
    <property type="match status" value="1"/>
</dbReference>
<dbReference type="NCBIfam" id="NF003544">
    <property type="entry name" value="PRK05201.1"/>
    <property type="match status" value="1"/>
</dbReference>
<dbReference type="PANTHER" id="PTHR48102">
    <property type="entry name" value="ATP-DEPENDENT CLP PROTEASE ATP-BINDING SUBUNIT CLPX-LIKE, MITOCHONDRIAL-RELATED"/>
    <property type="match status" value="1"/>
</dbReference>
<dbReference type="PANTHER" id="PTHR48102:SF3">
    <property type="entry name" value="ATP-DEPENDENT PROTEASE ATPASE SUBUNIT HSLU"/>
    <property type="match status" value="1"/>
</dbReference>
<dbReference type="Pfam" id="PF00004">
    <property type="entry name" value="AAA"/>
    <property type="match status" value="1"/>
</dbReference>
<dbReference type="Pfam" id="PF07724">
    <property type="entry name" value="AAA_2"/>
    <property type="match status" value="1"/>
</dbReference>
<dbReference type="Pfam" id="PF10431">
    <property type="entry name" value="ClpB_D2-small"/>
    <property type="match status" value="1"/>
</dbReference>
<dbReference type="SMART" id="SM00382">
    <property type="entry name" value="AAA"/>
    <property type="match status" value="1"/>
</dbReference>
<dbReference type="SMART" id="SM01086">
    <property type="entry name" value="ClpB_D2-small"/>
    <property type="match status" value="1"/>
</dbReference>
<dbReference type="SUPFAM" id="SSF52540">
    <property type="entry name" value="P-loop containing nucleoside triphosphate hydrolases"/>
    <property type="match status" value="1"/>
</dbReference>
<sequence>MTDFSPREIVSELDRFIVGQADAKRAVAIALRNRWRRLQLEGSLREEVLPKNILMIGPTGVGKTEIARRLAKLAGAPFLKVEATKFTEVGYVGRDVEQIIRDLVEVAIAQVREKKRKDVQARAQVAAEERVLDALVGPGSGPATRDSFRKKLRAGELNDKEIEIETQAGSGSPMFEIPGMPGAQIGAVSLGDIFGKMGGRTKKRRLTVADSHEILVNEEADKLLDTDQLVQEAIAAVENNGIVFLDEIDKICVRDGRSGGEVSREGVQRDLLPLIEGTTVSTKHGAVKTEHILFIASGAFHIAKPSDLLPELQGRLPIRVELNALSRDDMRRILTEPEASLIKQYVALMKTEGVTLDFSDDAIDALADVAVAVNSTVENIGARRLQTVMERVLDEISFVAPDRHGETFQVDADYVKTNVGDLAKNTDLSRFIL</sequence>
<name>HSLU_RHOPT</name>
<evidence type="ECO:0000255" key="1">
    <source>
        <dbReference type="HAMAP-Rule" id="MF_00249"/>
    </source>
</evidence>